<accession>D9U299</accession>
<keyword id="KW-1015">Disulfide bond</keyword>
<keyword id="KW-1213">G-protein coupled receptor impairing toxin</keyword>
<keyword id="KW-0872">Ion channel impairing toxin</keyword>
<keyword id="KW-0528">Neurotoxin</keyword>
<keyword id="KW-0964">Secreted</keyword>
<keyword id="KW-0732">Signal</keyword>
<keyword id="KW-0800">Toxin</keyword>
<proteinExistence type="evidence at transcript level"/>
<organism>
    <name type="scientific">Lychas mucronatus</name>
    <name type="common">Chinese swimming scorpion</name>
    <dbReference type="NCBI Taxonomy" id="172552"/>
    <lineage>
        <taxon>Eukaryota</taxon>
        <taxon>Metazoa</taxon>
        <taxon>Ecdysozoa</taxon>
        <taxon>Arthropoda</taxon>
        <taxon>Chelicerata</taxon>
        <taxon>Arachnida</taxon>
        <taxon>Scorpiones</taxon>
        <taxon>Buthida</taxon>
        <taxon>Buthoidea</taxon>
        <taxon>Buthidae</taxon>
        <taxon>Lychas</taxon>
    </lineage>
</organism>
<dbReference type="EMBL" id="EU159282">
    <property type="protein sequence ID" value="ABX76755.1"/>
    <property type="molecule type" value="mRNA"/>
</dbReference>
<dbReference type="GO" id="GO:0005576">
    <property type="term" value="C:extracellular region"/>
    <property type="evidence" value="ECO:0007669"/>
    <property type="project" value="UniProtKB-SubCell"/>
</dbReference>
<dbReference type="GO" id="GO:0019871">
    <property type="term" value="F:sodium channel inhibitor activity"/>
    <property type="evidence" value="ECO:0007669"/>
    <property type="project" value="InterPro"/>
</dbReference>
<dbReference type="GO" id="GO:0090729">
    <property type="term" value="F:toxin activity"/>
    <property type="evidence" value="ECO:0007669"/>
    <property type="project" value="UniProtKB-KW"/>
</dbReference>
<dbReference type="CDD" id="cd23106">
    <property type="entry name" value="neurotoxins_LC_scorpion"/>
    <property type="match status" value="1"/>
</dbReference>
<dbReference type="Gene3D" id="3.30.30.10">
    <property type="entry name" value="Knottin, scorpion toxin-like"/>
    <property type="match status" value="1"/>
</dbReference>
<dbReference type="InterPro" id="IPR044062">
    <property type="entry name" value="LCN-type_CS_alpha_beta_dom"/>
</dbReference>
<dbReference type="InterPro" id="IPR036574">
    <property type="entry name" value="Scorpion_toxin-like_sf"/>
</dbReference>
<dbReference type="InterPro" id="IPR002061">
    <property type="entry name" value="Scorpion_toxinL/defensin"/>
</dbReference>
<dbReference type="Pfam" id="PF00537">
    <property type="entry name" value="Toxin_3"/>
    <property type="match status" value="1"/>
</dbReference>
<dbReference type="SUPFAM" id="SSF57095">
    <property type="entry name" value="Scorpion toxin-like"/>
    <property type="match status" value="1"/>
</dbReference>
<dbReference type="PROSITE" id="PS51863">
    <property type="entry name" value="LCN_CSAB"/>
    <property type="match status" value="1"/>
</dbReference>
<comment type="function">
    <text evidence="1">The heterodimer LVP1 induces lipolysis in rat adipocytes. Induction of lipolysis by LVP1 appears to be mediated through the beta-2 adrenergic receptor pathway (ADRB2) (By similarity).</text>
</comment>
<comment type="subunit">
    <text>Heterodimer of this alpha chain and a beta chain (AC D9U2A2).</text>
</comment>
<comment type="subcellular location">
    <subcellularLocation>
        <location evidence="1">Secreted</location>
    </subcellularLocation>
</comment>
<comment type="tissue specificity">
    <text>Expressed by the venom gland.</text>
</comment>
<comment type="domain">
    <text evidence="4">Has the structural arrangement of an alpha-helix connected to antiparallel beta-sheets by disulfide bonds (CS-alpha/beta).</text>
</comment>
<comment type="similarity">
    <text evidence="4">Belongs to the long (3 C-C) scorpion toxin superfamily.</text>
</comment>
<sequence length="91" mass="10467">MNIKLFCFLSILISLTGLSLSGDDGNYPIDANGNRYSCGKLGENEFCLKVCKLHGVKRGYCYFFKCYCELLKDKDIQFFDAYKTYCKNSRI</sequence>
<reference key="1">
    <citation type="journal article" date="2010" name="BMC Genomics">
        <title>Comparative venom gland transcriptome analysis of the scorpion Lychas mucronatus reveals intraspecific toxic gene diversity and new venomous components.</title>
        <authorList>
            <person name="Zhao R."/>
            <person name="Ma Y."/>
            <person name="He Y."/>
            <person name="Di Z."/>
            <person name="Wu Y.-L."/>
            <person name="Cao Z.-J."/>
            <person name="Li W.-X."/>
        </authorList>
    </citation>
    <scope>NUCLEOTIDE SEQUENCE [MRNA]</scope>
    <source>
        <strain>Hainan</strain>
        <tissue>Venom gland</tissue>
    </source>
</reference>
<evidence type="ECO:0000250" key="1"/>
<evidence type="ECO:0000255" key="2"/>
<evidence type="ECO:0000255" key="3">
    <source>
        <dbReference type="PROSITE-ProRule" id="PRU01210"/>
    </source>
</evidence>
<evidence type="ECO:0000305" key="4"/>
<name>LVPAH_LYCMC</name>
<protein>
    <recommendedName>
        <fullName>Lipolysis-activating peptide 1-alpha chain</fullName>
        <shortName>LVP1-alpha</shortName>
    </recommendedName>
    <alternativeName>
        <fullName>Neurotoxin LmNaTx7</fullName>
    </alternativeName>
</protein>
<feature type="signal peptide" evidence="2">
    <location>
        <begin position="1"/>
        <end position="21"/>
    </location>
</feature>
<feature type="chain" id="PRO_0000403879" description="Lipolysis-activating peptide 1-alpha chain">
    <location>
        <begin position="22"/>
        <end position="91"/>
    </location>
</feature>
<feature type="domain" description="LCN-type CS-alpha/beta" evidence="3">
    <location>
        <begin position="23"/>
        <end position="87"/>
    </location>
</feature>
<feature type="disulfide bond" evidence="3">
    <location>
        <begin position="38"/>
        <end position="61"/>
    </location>
</feature>
<feature type="disulfide bond" evidence="3">
    <location>
        <begin position="47"/>
        <end position="66"/>
    </location>
</feature>
<feature type="disulfide bond" evidence="3">
    <location>
        <begin position="51"/>
        <end position="68"/>
    </location>
</feature>
<feature type="disulfide bond" description="Interchain (with C-86 in LVP1 chain beta)" evidence="1">
    <location>
        <position position="86"/>
    </location>
</feature>